<feature type="chain" id="PRO_0000090074" description="6-phosphogluconate dehydrogenase, decarboxylating">
    <location>
        <begin position="1"/>
        <end position="492"/>
    </location>
</feature>
<feature type="active site" description="Proton acceptor" evidence="1">
    <location>
        <position position="187"/>
    </location>
</feature>
<feature type="active site" description="Proton donor" evidence="1">
    <location>
        <position position="194"/>
    </location>
</feature>
<feature type="binding site" evidence="1">
    <location>
        <begin position="13"/>
        <end position="18"/>
    </location>
    <ligand>
        <name>NADP(+)</name>
        <dbReference type="ChEBI" id="CHEBI:58349"/>
    </ligand>
</feature>
<feature type="binding site" evidence="1">
    <location>
        <begin position="36"/>
        <end position="38"/>
    </location>
    <ligand>
        <name>NADP(+)</name>
        <dbReference type="ChEBI" id="CHEBI:58349"/>
    </ligand>
</feature>
<feature type="binding site" evidence="1">
    <location>
        <begin position="78"/>
        <end position="80"/>
    </location>
    <ligand>
        <name>NADP(+)</name>
        <dbReference type="ChEBI" id="CHEBI:58349"/>
    </ligand>
</feature>
<feature type="binding site" evidence="1">
    <location>
        <position position="106"/>
    </location>
    <ligand>
        <name>NADP(+)</name>
        <dbReference type="ChEBI" id="CHEBI:58349"/>
    </ligand>
</feature>
<feature type="binding site" description="in other chain" evidence="1">
    <location>
        <position position="106"/>
    </location>
    <ligand>
        <name>substrate</name>
        <note>ligand shared between dimeric partners</note>
    </ligand>
</feature>
<feature type="binding site" description="in other chain" evidence="1">
    <location>
        <begin position="132"/>
        <end position="134"/>
    </location>
    <ligand>
        <name>substrate</name>
        <note>ligand shared between dimeric partners</note>
    </ligand>
</feature>
<feature type="binding site" description="in other chain" evidence="1">
    <location>
        <begin position="190"/>
        <end position="191"/>
    </location>
    <ligand>
        <name>substrate</name>
        <note>ligand shared between dimeric partners</note>
    </ligand>
</feature>
<feature type="binding site" description="in other chain" evidence="1">
    <location>
        <position position="195"/>
    </location>
    <ligand>
        <name>substrate</name>
        <note>ligand shared between dimeric partners</note>
    </ligand>
</feature>
<feature type="binding site" description="in other chain" evidence="1">
    <location>
        <position position="264"/>
    </location>
    <ligand>
        <name>substrate</name>
        <note>ligand shared between dimeric partners</note>
    </ligand>
</feature>
<feature type="binding site" description="in other chain" evidence="1">
    <location>
        <position position="291"/>
    </location>
    <ligand>
        <name>substrate</name>
        <note>ligand shared between dimeric partners</note>
    </ligand>
</feature>
<feature type="binding site" evidence="1">
    <location>
        <position position="449"/>
    </location>
    <ligand>
        <name>substrate</name>
        <note>ligand shared between dimeric partners</note>
    </ligand>
</feature>
<feature type="binding site" evidence="1">
    <location>
        <position position="455"/>
    </location>
    <ligand>
        <name>substrate</name>
        <note>ligand shared between dimeric partners</note>
    </ligand>
</feature>
<feature type="modified residue" description="Phosphoserine" evidence="2">
    <location>
        <position position="107"/>
    </location>
</feature>
<feature type="modified residue" description="Phosphoserine" evidence="2">
    <location>
        <position position="215"/>
    </location>
</feature>
<feature type="sequence conflict" description="In Ref. 1; BAA13823." evidence="3" ref="1">
    <original>IA</original>
    <variation>ST</variation>
    <location>
        <begin position="219"/>
        <end position="220"/>
    </location>
</feature>
<organism>
    <name type="scientific">Schizosaccharomyces pombe (strain 972 / ATCC 24843)</name>
    <name type="common">Fission yeast</name>
    <dbReference type="NCBI Taxonomy" id="284812"/>
    <lineage>
        <taxon>Eukaryota</taxon>
        <taxon>Fungi</taxon>
        <taxon>Dikarya</taxon>
        <taxon>Ascomycota</taxon>
        <taxon>Taphrinomycotina</taxon>
        <taxon>Schizosaccharomycetes</taxon>
        <taxon>Schizosaccharomycetales</taxon>
        <taxon>Schizosaccharomycetaceae</taxon>
        <taxon>Schizosaccharomyces</taxon>
    </lineage>
</organism>
<proteinExistence type="evidence at protein level"/>
<reference key="1">
    <citation type="journal article" date="1997" name="DNA Res.">
        <title>Identification of open reading frames in Schizosaccharomyces pombe cDNAs.</title>
        <authorList>
            <person name="Yoshioka S."/>
            <person name="Kato K."/>
            <person name="Nakai K."/>
            <person name="Okayama H."/>
            <person name="Nojima H."/>
        </authorList>
    </citation>
    <scope>NUCLEOTIDE SEQUENCE [LARGE SCALE MRNA]</scope>
    <source>
        <strain>PR745</strain>
    </source>
</reference>
<reference key="2">
    <citation type="journal article" date="2002" name="Nature">
        <title>The genome sequence of Schizosaccharomyces pombe.</title>
        <authorList>
            <person name="Wood V."/>
            <person name="Gwilliam R."/>
            <person name="Rajandream M.A."/>
            <person name="Lyne M.H."/>
            <person name="Lyne R."/>
            <person name="Stewart A."/>
            <person name="Sgouros J.G."/>
            <person name="Peat N."/>
            <person name="Hayles J."/>
            <person name="Baker S.G."/>
            <person name="Basham D."/>
            <person name="Bowman S."/>
            <person name="Brooks K."/>
            <person name="Brown D."/>
            <person name="Brown S."/>
            <person name="Chillingworth T."/>
            <person name="Churcher C.M."/>
            <person name="Collins M."/>
            <person name="Connor R."/>
            <person name="Cronin A."/>
            <person name="Davis P."/>
            <person name="Feltwell T."/>
            <person name="Fraser A."/>
            <person name="Gentles S."/>
            <person name="Goble A."/>
            <person name="Hamlin N."/>
            <person name="Harris D.E."/>
            <person name="Hidalgo J."/>
            <person name="Hodgson G."/>
            <person name="Holroyd S."/>
            <person name="Hornsby T."/>
            <person name="Howarth S."/>
            <person name="Huckle E.J."/>
            <person name="Hunt S."/>
            <person name="Jagels K."/>
            <person name="James K.D."/>
            <person name="Jones L."/>
            <person name="Jones M."/>
            <person name="Leather S."/>
            <person name="McDonald S."/>
            <person name="McLean J."/>
            <person name="Mooney P."/>
            <person name="Moule S."/>
            <person name="Mungall K.L."/>
            <person name="Murphy L.D."/>
            <person name="Niblett D."/>
            <person name="Odell C."/>
            <person name="Oliver K."/>
            <person name="O'Neil S."/>
            <person name="Pearson D."/>
            <person name="Quail M.A."/>
            <person name="Rabbinowitsch E."/>
            <person name="Rutherford K.M."/>
            <person name="Rutter S."/>
            <person name="Saunders D."/>
            <person name="Seeger K."/>
            <person name="Sharp S."/>
            <person name="Skelton J."/>
            <person name="Simmonds M.N."/>
            <person name="Squares R."/>
            <person name="Squares S."/>
            <person name="Stevens K."/>
            <person name="Taylor K."/>
            <person name="Taylor R.G."/>
            <person name="Tivey A."/>
            <person name="Walsh S.V."/>
            <person name="Warren T."/>
            <person name="Whitehead S."/>
            <person name="Woodward J.R."/>
            <person name="Volckaert G."/>
            <person name="Aert R."/>
            <person name="Robben J."/>
            <person name="Grymonprez B."/>
            <person name="Weltjens I."/>
            <person name="Vanstreels E."/>
            <person name="Rieger M."/>
            <person name="Schaefer M."/>
            <person name="Mueller-Auer S."/>
            <person name="Gabel C."/>
            <person name="Fuchs M."/>
            <person name="Duesterhoeft A."/>
            <person name="Fritzc C."/>
            <person name="Holzer E."/>
            <person name="Moestl D."/>
            <person name="Hilbert H."/>
            <person name="Borzym K."/>
            <person name="Langer I."/>
            <person name="Beck A."/>
            <person name="Lehrach H."/>
            <person name="Reinhardt R."/>
            <person name="Pohl T.M."/>
            <person name="Eger P."/>
            <person name="Zimmermann W."/>
            <person name="Wedler H."/>
            <person name="Wambutt R."/>
            <person name="Purnelle B."/>
            <person name="Goffeau A."/>
            <person name="Cadieu E."/>
            <person name="Dreano S."/>
            <person name="Gloux S."/>
            <person name="Lelaure V."/>
            <person name="Mottier S."/>
            <person name="Galibert F."/>
            <person name="Aves S.J."/>
            <person name="Xiang Z."/>
            <person name="Hunt C."/>
            <person name="Moore K."/>
            <person name="Hurst S.M."/>
            <person name="Lucas M."/>
            <person name="Rochet M."/>
            <person name="Gaillardin C."/>
            <person name="Tallada V.A."/>
            <person name="Garzon A."/>
            <person name="Thode G."/>
            <person name="Daga R.R."/>
            <person name="Cruzado L."/>
            <person name="Jimenez J."/>
            <person name="Sanchez M."/>
            <person name="del Rey F."/>
            <person name="Benito J."/>
            <person name="Dominguez A."/>
            <person name="Revuelta J.L."/>
            <person name="Moreno S."/>
            <person name="Armstrong J."/>
            <person name="Forsburg S.L."/>
            <person name="Cerutti L."/>
            <person name="Lowe T."/>
            <person name="McCombie W.R."/>
            <person name="Paulsen I."/>
            <person name="Potashkin J."/>
            <person name="Shpakovski G.V."/>
            <person name="Ussery D."/>
            <person name="Barrell B.G."/>
            <person name="Nurse P."/>
        </authorList>
    </citation>
    <scope>NUCLEOTIDE SEQUENCE [LARGE SCALE GENOMIC DNA]</scope>
    <source>
        <strain>972 / ATCC 24843</strain>
    </source>
</reference>
<reference key="3">
    <citation type="journal article" date="2008" name="J. Proteome Res.">
        <title>Phosphoproteome analysis of fission yeast.</title>
        <authorList>
            <person name="Wilson-Grady J.T."/>
            <person name="Villen J."/>
            <person name="Gygi S.P."/>
        </authorList>
    </citation>
    <scope>PHOSPHORYLATION [LARGE SCALE ANALYSIS] AT SER-107 AND SER-215</scope>
    <scope>IDENTIFICATION BY MASS SPECTROMETRY</scope>
</reference>
<protein>
    <recommendedName>
        <fullName>6-phosphogluconate dehydrogenase, decarboxylating</fullName>
        <ecNumber>1.1.1.44</ecNumber>
    </recommendedName>
</protein>
<dbReference type="EC" id="1.1.1.44"/>
<dbReference type="EMBL" id="D89161">
    <property type="protein sequence ID" value="BAA13823.1"/>
    <property type="status" value="ALT_INIT"/>
    <property type="molecule type" value="mRNA"/>
</dbReference>
<dbReference type="EMBL" id="CU329671">
    <property type="protein sequence ID" value="CAA22536.1"/>
    <property type="molecule type" value="Genomic_DNA"/>
</dbReference>
<dbReference type="PIR" id="T40628">
    <property type="entry name" value="T40628"/>
</dbReference>
<dbReference type="PIR" id="T42523">
    <property type="entry name" value="T42523"/>
</dbReference>
<dbReference type="SMR" id="P78812"/>
<dbReference type="BioGRID" id="277661">
    <property type="interactions" value="9"/>
</dbReference>
<dbReference type="FunCoup" id="P78812">
    <property type="interactions" value="615"/>
</dbReference>
<dbReference type="STRING" id="284812.P78812"/>
<dbReference type="iPTMnet" id="P78812"/>
<dbReference type="PaxDb" id="4896-SPBC660.16.1"/>
<dbReference type="EnsemblFungi" id="SPBC660.16.1">
    <property type="protein sequence ID" value="SPBC660.16.1:pep"/>
    <property type="gene ID" value="SPBC660.16"/>
</dbReference>
<dbReference type="KEGG" id="spo:2541146"/>
<dbReference type="PomBase" id="SPBC660.16"/>
<dbReference type="VEuPathDB" id="FungiDB:SPBC660.16"/>
<dbReference type="eggNOG" id="KOG2653">
    <property type="taxonomic scope" value="Eukaryota"/>
</dbReference>
<dbReference type="HOGENOM" id="CLU_024540_4_2_1"/>
<dbReference type="InParanoid" id="P78812"/>
<dbReference type="OMA" id="CVTHVGP"/>
<dbReference type="PhylomeDB" id="P78812"/>
<dbReference type="BRENDA" id="1.1.1.44">
    <property type="organism ID" value="5613"/>
</dbReference>
<dbReference type="Reactome" id="R-SPO-71336">
    <property type="pathway name" value="Pentose phosphate pathway"/>
</dbReference>
<dbReference type="UniPathway" id="UPA00115">
    <property type="reaction ID" value="UER00410"/>
</dbReference>
<dbReference type="PRO" id="PR:P78812"/>
<dbReference type="Proteomes" id="UP000002485">
    <property type="component" value="Chromosome II"/>
</dbReference>
<dbReference type="GO" id="GO:0005829">
    <property type="term" value="C:cytosol"/>
    <property type="evidence" value="ECO:0007005"/>
    <property type="project" value="PomBase"/>
</dbReference>
<dbReference type="GO" id="GO:0005739">
    <property type="term" value="C:mitochondrion"/>
    <property type="evidence" value="ECO:0000250"/>
    <property type="project" value="PomBase"/>
</dbReference>
<dbReference type="GO" id="GO:0050661">
    <property type="term" value="F:NADP binding"/>
    <property type="evidence" value="ECO:0000314"/>
    <property type="project" value="PomBase"/>
</dbReference>
<dbReference type="GO" id="GO:0004616">
    <property type="term" value="F:phosphogluconate dehydrogenase (decarboxylating) activity"/>
    <property type="evidence" value="ECO:0000314"/>
    <property type="project" value="PomBase"/>
</dbReference>
<dbReference type="GO" id="GO:0019521">
    <property type="term" value="P:D-gluconate metabolic process"/>
    <property type="evidence" value="ECO:0007669"/>
    <property type="project" value="UniProtKB-KW"/>
</dbReference>
<dbReference type="GO" id="GO:0061688">
    <property type="term" value="P:glycolytic process via Entner-Doudoroff Pathway"/>
    <property type="evidence" value="ECO:0000314"/>
    <property type="project" value="PomBase"/>
</dbReference>
<dbReference type="GO" id="GO:0009051">
    <property type="term" value="P:pentose-phosphate shunt, oxidative branch"/>
    <property type="evidence" value="ECO:0000314"/>
    <property type="project" value="PomBase"/>
</dbReference>
<dbReference type="FunFam" id="1.10.1040.10:FF:000002">
    <property type="entry name" value="6-phosphogluconate dehydrogenase, decarboxylating"/>
    <property type="match status" value="1"/>
</dbReference>
<dbReference type="FunFam" id="1.20.5.320:FF:000002">
    <property type="entry name" value="6-phosphogluconate dehydrogenase, decarboxylating"/>
    <property type="match status" value="1"/>
</dbReference>
<dbReference type="FunFam" id="3.40.50.720:FF:000007">
    <property type="entry name" value="6-phosphogluconate dehydrogenase, decarboxylating"/>
    <property type="match status" value="1"/>
</dbReference>
<dbReference type="Gene3D" id="1.20.5.320">
    <property type="entry name" value="6-Phosphogluconate Dehydrogenase, domain 3"/>
    <property type="match status" value="1"/>
</dbReference>
<dbReference type="Gene3D" id="1.10.1040.10">
    <property type="entry name" value="N-(1-d-carboxylethyl)-l-norvaline Dehydrogenase, domain 2"/>
    <property type="match status" value="1"/>
</dbReference>
<dbReference type="Gene3D" id="3.40.50.720">
    <property type="entry name" value="NAD(P)-binding Rossmann-like Domain"/>
    <property type="match status" value="1"/>
</dbReference>
<dbReference type="InterPro" id="IPR008927">
    <property type="entry name" value="6-PGluconate_DH-like_C_sf"/>
</dbReference>
<dbReference type="InterPro" id="IPR013328">
    <property type="entry name" value="6PGD_dom2"/>
</dbReference>
<dbReference type="InterPro" id="IPR006114">
    <property type="entry name" value="6PGDH_C"/>
</dbReference>
<dbReference type="InterPro" id="IPR006113">
    <property type="entry name" value="6PGDH_Gnd/GntZ"/>
</dbReference>
<dbReference type="InterPro" id="IPR006115">
    <property type="entry name" value="6PGDH_NADP-bd"/>
</dbReference>
<dbReference type="InterPro" id="IPR006184">
    <property type="entry name" value="6PGdom_BS"/>
</dbReference>
<dbReference type="InterPro" id="IPR036291">
    <property type="entry name" value="NAD(P)-bd_dom_sf"/>
</dbReference>
<dbReference type="InterPro" id="IPR006183">
    <property type="entry name" value="Pgluconate_DH"/>
</dbReference>
<dbReference type="NCBIfam" id="TIGR00873">
    <property type="entry name" value="gnd"/>
    <property type="match status" value="1"/>
</dbReference>
<dbReference type="NCBIfam" id="NF006765">
    <property type="entry name" value="PRK09287.1"/>
    <property type="match status" value="1"/>
</dbReference>
<dbReference type="PANTHER" id="PTHR11811">
    <property type="entry name" value="6-PHOSPHOGLUCONATE DEHYDROGENASE"/>
    <property type="match status" value="1"/>
</dbReference>
<dbReference type="Pfam" id="PF00393">
    <property type="entry name" value="6PGD"/>
    <property type="match status" value="1"/>
</dbReference>
<dbReference type="Pfam" id="PF03446">
    <property type="entry name" value="NAD_binding_2"/>
    <property type="match status" value="1"/>
</dbReference>
<dbReference type="PIRSF" id="PIRSF000109">
    <property type="entry name" value="6PGD"/>
    <property type="match status" value="1"/>
</dbReference>
<dbReference type="PRINTS" id="PR00076">
    <property type="entry name" value="6PGDHDRGNASE"/>
</dbReference>
<dbReference type="SMART" id="SM01350">
    <property type="entry name" value="6PGD"/>
    <property type="match status" value="1"/>
</dbReference>
<dbReference type="SUPFAM" id="SSF48179">
    <property type="entry name" value="6-phosphogluconate dehydrogenase C-terminal domain-like"/>
    <property type="match status" value="1"/>
</dbReference>
<dbReference type="SUPFAM" id="SSF51735">
    <property type="entry name" value="NAD(P)-binding Rossmann-fold domains"/>
    <property type="match status" value="1"/>
</dbReference>
<dbReference type="PROSITE" id="PS00461">
    <property type="entry name" value="6PGD"/>
    <property type="match status" value="1"/>
</dbReference>
<evidence type="ECO:0000250" key="1"/>
<evidence type="ECO:0000269" key="2">
    <source>
    </source>
</evidence>
<evidence type="ECO:0000305" key="3"/>
<keyword id="KW-0311">Gluconate utilization</keyword>
<keyword id="KW-0521">NADP</keyword>
<keyword id="KW-0560">Oxidoreductase</keyword>
<keyword id="KW-0570">Pentose shunt</keyword>
<keyword id="KW-0597">Phosphoprotein</keyword>
<keyword id="KW-1185">Reference proteome</keyword>
<sequence length="492" mass="53680">MSQKEVADFGLIGLAVMGQNLILNGADKGFTVCCYNRTTSRVDEFLANEAKGKSIVGAHSLEEFVSKLKKPRVCILLVKAGKPVDYLIEGLAPLLEKGDIIVDGGNSHYPDTTRRCEELAKKGILFVGSGVSGGEEGARYGPSLMPGGNPAAWPRIKPIFQTLAAKAGNNEPCCDWVGEQGAGHYVKMVHNGIEYGDMQLICETYDIMKRGLGMSCDEIADVFEKWNTGKLDSFLIEITRDVLRYKADDGKPLVEKILDAAGQKGTGKWTAQNALEMGTPVSLITEAVFARCLSSLKSERVRASKKLTGPNTKFTGDKKQLIDDLEDALYASKIISYAQGFMLMREAAKEYGWKLNNAGIALMWRGGCIIRSVFLKDITEAFREDPNLESILFHPFFTNGVEKAQAGWRRVVAQAAMLGIPVPATSTGLSFYDGYRSAVLPANLLQAQRDYFGAHTFRVLPEAADKSLPADKDIHINWTGHGGNISATTYDA</sequence>
<accession>P78812</accession>
<accession>Q9UQW5</accession>
<name>6PGD_SCHPO</name>
<gene>
    <name type="ORF">SPBC660.16</name>
</gene>
<comment type="function">
    <text evidence="1">Catalyzes the oxidative decarboxylation of 6-phosphogluconate to ribulose 5-phosphate and CO(2), with concomitant reduction of NADP to NADPH.</text>
</comment>
<comment type="catalytic activity">
    <reaction>
        <text>6-phospho-D-gluconate + NADP(+) = D-ribulose 5-phosphate + CO2 + NADPH</text>
        <dbReference type="Rhea" id="RHEA:10116"/>
        <dbReference type="ChEBI" id="CHEBI:16526"/>
        <dbReference type="ChEBI" id="CHEBI:57783"/>
        <dbReference type="ChEBI" id="CHEBI:58121"/>
        <dbReference type="ChEBI" id="CHEBI:58349"/>
        <dbReference type="ChEBI" id="CHEBI:58759"/>
        <dbReference type="EC" id="1.1.1.44"/>
    </reaction>
</comment>
<comment type="pathway">
    <text>Carbohydrate degradation; pentose phosphate pathway; D-ribulose 5-phosphate from D-glucose 6-phosphate (oxidative stage): step 3/3.</text>
</comment>
<comment type="subunit">
    <text evidence="1">Homodimer.</text>
</comment>
<comment type="similarity">
    <text evidence="3">Belongs to the 6-phosphogluconate dehydrogenase family.</text>
</comment>
<comment type="sequence caution" evidence="3">
    <conflict type="erroneous initiation">
        <sequence resource="EMBL-CDS" id="BAA13823"/>
    </conflict>
</comment>